<protein>
    <recommendedName>
        <fullName evidence="1">Class B acid phosphatase</fullName>
        <shortName evidence="1">CBAP</shortName>
        <ecNumber evidence="1">3.1.3.2</ecNumber>
    </recommendedName>
</protein>
<name>APHA_EDWI9</name>
<gene>
    <name evidence="1" type="primary">aphA</name>
    <name type="ordered locus">NT01EI_3833</name>
</gene>
<comment type="function">
    <text evidence="1">Dephosphorylates several organic phosphate monoesters. Also has a phosphotransferase activity catalyzing the transfer of low-energy phosphate groups from organic phosphate monoesters to free hydroxyl groups of various organic compounds (By similarity).</text>
</comment>
<comment type="catalytic activity">
    <reaction evidence="1">
        <text>a phosphate monoester + H2O = an alcohol + phosphate</text>
        <dbReference type="Rhea" id="RHEA:15017"/>
        <dbReference type="ChEBI" id="CHEBI:15377"/>
        <dbReference type="ChEBI" id="CHEBI:30879"/>
        <dbReference type="ChEBI" id="CHEBI:43474"/>
        <dbReference type="ChEBI" id="CHEBI:67140"/>
        <dbReference type="EC" id="3.1.3.2"/>
    </reaction>
</comment>
<comment type="cofactor">
    <cofactor evidence="1">
        <name>Mg(2+)</name>
        <dbReference type="ChEBI" id="CHEBI:18420"/>
    </cofactor>
    <text evidence="1">Binds 1 Mg(2+) ion per subunit.</text>
</comment>
<comment type="subunit">
    <text evidence="1">Homotetramer.</text>
</comment>
<comment type="subcellular location">
    <subcellularLocation>
        <location evidence="1">Periplasm</location>
    </subcellularLocation>
</comment>
<comment type="similarity">
    <text evidence="1">Belongs to the class B bacterial acid phosphatase family.</text>
</comment>
<reference evidence="4" key="1">
    <citation type="submission" date="2009-03" db="EMBL/GenBank/DDBJ databases">
        <title>Complete genome sequence of Edwardsiella ictaluri 93-146.</title>
        <authorList>
            <person name="Williams M.L."/>
            <person name="Gillaspy A.F."/>
            <person name="Dyer D.W."/>
            <person name="Thune R.L."/>
            <person name="Waldbieser G.C."/>
            <person name="Schuster S.C."/>
            <person name="Gipson J."/>
            <person name="Zaitshik J."/>
            <person name="Landry C."/>
            <person name="Lawrence M.L."/>
        </authorList>
    </citation>
    <scope>NUCLEOTIDE SEQUENCE [LARGE SCALE GENOMIC DNA]</scope>
    <source>
        <strain evidence="3">93-146</strain>
    </source>
</reference>
<sequence>MFITTKKSLIALVLATAGLISSPVSFATETGAQPNLGATLTQLTQQYPIHWISIEQVAESLKGKAPISVGFDIDDTLLFSSPAFFYGKQKFSPDSNAFLKNQKFWDAVSSSGWDRFSIPKDSGRALMELHLKRGDHVYFITGRPMPSNGKEDLTQTLKDDFKIPDNQLNKVIFAGTKQDAKVEYMQKYHITIFYGDSDNDIQDARKAGAEGIRVLRPLNSTNKPMPKNGAFGEKVIVNSQY</sequence>
<keyword id="KW-0378">Hydrolase</keyword>
<keyword id="KW-0460">Magnesium</keyword>
<keyword id="KW-0479">Metal-binding</keyword>
<keyword id="KW-0574">Periplasm</keyword>
<keyword id="KW-0732">Signal</keyword>
<dbReference type="EC" id="3.1.3.2" evidence="1"/>
<dbReference type="EMBL" id="CP001600">
    <property type="protein sequence ID" value="ACR70952.1"/>
    <property type="molecule type" value="Genomic_DNA"/>
</dbReference>
<dbReference type="RefSeq" id="WP_015872984.1">
    <property type="nucleotide sequence ID" value="NZ_CP169062.1"/>
</dbReference>
<dbReference type="SMR" id="C5BC46"/>
<dbReference type="STRING" id="67780.B6E78_10735"/>
<dbReference type="GeneID" id="69540658"/>
<dbReference type="KEGG" id="eic:NT01EI_3833"/>
<dbReference type="PATRIC" id="fig|634503.3.peg.3420"/>
<dbReference type="HOGENOM" id="CLU_081496_0_0_6"/>
<dbReference type="OrthoDB" id="2234478at2"/>
<dbReference type="Proteomes" id="UP000001485">
    <property type="component" value="Chromosome"/>
</dbReference>
<dbReference type="GO" id="GO:0030288">
    <property type="term" value="C:outer membrane-bounded periplasmic space"/>
    <property type="evidence" value="ECO:0007669"/>
    <property type="project" value="InterPro"/>
</dbReference>
<dbReference type="GO" id="GO:0003993">
    <property type="term" value="F:acid phosphatase activity"/>
    <property type="evidence" value="ECO:0007669"/>
    <property type="project" value="UniProtKB-EC"/>
</dbReference>
<dbReference type="GO" id="GO:0046872">
    <property type="term" value="F:metal ion binding"/>
    <property type="evidence" value="ECO:0007669"/>
    <property type="project" value="UniProtKB-KW"/>
</dbReference>
<dbReference type="CDD" id="cd07499">
    <property type="entry name" value="HAD_CBAP"/>
    <property type="match status" value="1"/>
</dbReference>
<dbReference type="Gene3D" id="3.40.50.1000">
    <property type="entry name" value="HAD superfamily/HAD-like"/>
    <property type="match status" value="1"/>
</dbReference>
<dbReference type="InterPro" id="IPR005519">
    <property type="entry name" value="Acid_phosphat_B-like"/>
</dbReference>
<dbReference type="InterPro" id="IPR036412">
    <property type="entry name" value="HAD-like_sf"/>
</dbReference>
<dbReference type="InterPro" id="IPR010025">
    <property type="entry name" value="HAD-SF_ppase_IIIB_AphA"/>
</dbReference>
<dbReference type="InterPro" id="IPR023214">
    <property type="entry name" value="HAD_sf"/>
</dbReference>
<dbReference type="NCBIfam" id="TIGR01672">
    <property type="entry name" value="AphA"/>
    <property type="match status" value="1"/>
</dbReference>
<dbReference type="Pfam" id="PF03767">
    <property type="entry name" value="Acid_phosphat_B"/>
    <property type="match status" value="1"/>
</dbReference>
<dbReference type="SFLD" id="SFLDG01127">
    <property type="entry name" value="C1.3:_Acid_Phosphatase_Like"/>
    <property type="match status" value="1"/>
</dbReference>
<dbReference type="SFLD" id="SFLDS00003">
    <property type="entry name" value="Haloacid_Dehalogenase"/>
    <property type="match status" value="1"/>
</dbReference>
<dbReference type="SUPFAM" id="SSF56784">
    <property type="entry name" value="HAD-like"/>
    <property type="match status" value="1"/>
</dbReference>
<organism>
    <name type="scientific">Edwardsiella ictaluri (strain 93-146)</name>
    <dbReference type="NCBI Taxonomy" id="634503"/>
    <lineage>
        <taxon>Bacteria</taxon>
        <taxon>Pseudomonadati</taxon>
        <taxon>Pseudomonadota</taxon>
        <taxon>Gammaproteobacteria</taxon>
        <taxon>Enterobacterales</taxon>
        <taxon>Hafniaceae</taxon>
        <taxon>Edwardsiella</taxon>
    </lineage>
</organism>
<proteinExistence type="inferred from homology"/>
<accession>C5BC46</accession>
<feature type="signal peptide" evidence="2">
    <location>
        <begin position="1"/>
        <end position="27"/>
    </location>
</feature>
<feature type="chain" id="PRO_0000415225" description="Class B acid phosphatase" evidence="2">
    <location>
        <begin position="28"/>
        <end position="241"/>
    </location>
</feature>
<feature type="active site" description="Nucleophile" evidence="1">
    <location>
        <position position="72"/>
    </location>
</feature>
<feature type="active site" description="Proton donor" evidence="1">
    <location>
        <position position="74"/>
    </location>
</feature>
<feature type="binding site" evidence="1">
    <location>
        <position position="72"/>
    </location>
    <ligand>
        <name>Mg(2+)</name>
        <dbReference type="ChEBI" id="CHEBI:18420"/>
    </ligand>
</feature>
<feature type="binding site" evidence="1">
    <location>
        <position position="74"/>
    </location>
    <ligand>
        <name>Mg(2+)</name>
        <dbReference type="ChEBI" id="CHEBI:18420"/>
    </ligand>
</feature>
<feature type="binding site" evidence="1">
    <location>
        <begin position="141"/>
        <end position="142"/>
    </location>
    <ligand>
        <name>substrate</name>
    </ligand>
</feature>
<feature type="binding site" evidence="1">
    <location>
        <position position="181"/>
    </location>
    <ligand>
        <name>substrate</name>
    </ligand>
</feature>
<feature type="binding site" evidence="1">
    <location>
        <position position="196"/>
    </location>
    <ligand>
        <name>Mg(2+)</name>
        <dbReference type="ChEBI" id="CHEBI:18420"/>
    </ligand>
</feature>
<evidence type="ECO:0000250" key="1">
    <source>
        <dbReference type="UniProtKB" id="P0AE22"/>
    </source>
</evidence>
<evidence type="ECO:0000255" key="2"/>
<evidence type="ECO:0000269" key="3">
    <source ref="1"/>
</evidence>
<evidence type="ECO:0000312" key="4">
    <source>
        <dbReference type="EMBL" id="ACR70952.1"/>
    </source>
</evidence>